<name>RL34_ALIB4</name>
<dbReference type="EMBL" id="CP000361">
    <property type="protein sequence ID" value="ABV67872.1"/>
    <property type="molecule type" value="Genomic_DNA"/>
</dbReference>
<dbReference type="RefSeq" id="WP_004509857.1">
    <property type="nucleotide sequence ID" value="NC_009850.1"/>
</dbReference>
<dbReference type="SMR" id="A8EV99"/>
<dbReference type="STRING" id="367737.Abu_1625"/>
<dbReference type="GeneID" id="24303710"/>
<dbReference type="KEGG" id="abu:Abu_1625"/>
<dbReference type="eggNOG" id="COG0230">
    <property type="taxonomic scope" value="Bacteria"/>
</dbReference>
<dbReference type="HOGENOM" id="CLU_129938_2_0_7"/>
<dbReference type="Proteomes" id="UP000001136">
    <property type="component" value="Chromosome"/>
</dbReference>
<dbReference type="GO" id="GO:1990904">
    <property type="term" value="C:ribonucleoprotein complex"/>
    <property type="evidence" value="ECO:0007669"/>
    <property type="project" value="UniProtKB-KW"/>
</dbReference>
<dbReference type="GO" id="GO:0005840">
    <property type="term" value="C:ribosome"/>
    <property type="evidence" value="ECO:0007669"/>
    <property type="project" value="UniProtKB-KW"/>
</dbReference>
<dbReference type="GO" id="GO:0003735">
    <property type="term" value="F:structural constituent of ribosome"/>
    <property type="evidence" value="ECO:0007669"/>
    <property type="project" value="InterPro"/>
</dbReference>
<dbReference type="GO" id="GO:0006412">
    <property type="term" value="P:translation"/>
    <property type="evidence" value="ECO:0007669"/>
    <property type="project" value="UniProtKB-UniRule"/>
</dbReference>
<dbReference type="FunFam" id="1.10.287.3980:FF:000001">
    <property type="entry name" value="Mitochondrial ribosomal protein L34"/>
    <property type="match status" value="1"/>
</dbReference>
<dbReference type="Gene3D" id="1.10.287.3980">
    <property type="match status" value="1"/>
</dbReference>
<dbReference type="HAMAP" id="MF_00391">
    <property type="entry name" value="Ribosomal_bL34"/>
    <property type="match status" value="1"/>
</dbReference>
<dbReference type="InterPro" id="IPR000271">
    <property type="entry name" value="Ribosomal_bL34"/>
</dbReference>
<dbReference type="InterPro" id="IPR020939">
    <property type="entry name" value="Ribosomal_bL34_CS"/>
</dbReference>
<dbReference type="NCBIfam" id="TIGR01030">
    <property type="entry name" value="rpmH_bact"/>
    <property type="match status" value="1"/>
</dbReference>
<dbReference type="PANTHER" id="PTHR14503:SF4">
    <property type="entry name" value="LARGE RIBOSOMAL SUBUNIT PROTEIN BL34M"/>
    <property type="match status" value="1"/>
</dbReference>
<dbReference type="PANTHER" id="PTHR14503">
    <property type="entry name" value="MITOCHONDRIAL RIBOSOMAL PROTEIN 34 FAMILY MEMBER"/>
    <property type="match status" value="1"/>
</dbReference>
<dbReference type="Pfam" id="PF00468">
    <property type="entry name" value="Ribosomal_L34"/>
    <property type="match status" value="1"/>
</dbReference>
<dbReference type="PROSITE" id="PS00784">
    <property type="entry name" value="RIBOSOMAL_L34"/>
    <property type="match status" value="1"/>
</dbReference>
<proteinExistence type="inferred from homology"/>
<reference key="1">
    <citation type="journal article" date="2007" name="PLoS ONE">
        <title>The complete genome sequence and analysis of the Epsilonproteobacterium Arcobacter butzleri.</title>
        <authorList>
            <person name="Miller W.G."/>
            <person name="Parker C.T."/>
            <person name="Rubenfield M."/>
            <person name="Mendz G.L."/>
            <person name="Woesten M.M.S.M."/>
            <person name="Ussery D.W."/>
            <person name="Stolz J.F."/>
            <person name="Binnewies T.T."/>
            <person name="Hallin P.F."/>
            <person name="Wang G."/>
            <person name="Malek J.A."/>
            <person name="Rogosin A."/>
            <person name="Stanker L.H."/>
            <person name="Mandrell R.E."/>
        </authorList>
    </citation>
    <scope>NUCLEOTIDE SEQUENCE [LARGE SCALE GENOMIC DNA]</scope>
    <source>
        <strain>RM4018</strain>
    </source>
</reference>
<feature type="chain" id="PRO_1000060752" description="Large ribosomal subunit protein bL34">
    <location>
        <begin position="1"/>
        <end position="44"/>
    </location>
</feature>
<comment type="similarity">
    <text evidence="1">Belongs to the bacterial ribosomal protein bL34 family.</text>
</comment>
<keyword id="KW-1185">Reference proteome</keyword>
<keyword id="KW-0687">Ribonucleoprotein</keyword>
<keyword id="KW-0689">Ribosomal protein</keyword>
<protein>
    <recommendedName>
        <fullName evidence="1">Large ribosomal subunit protein bL34</fullName>
    </recommendedName>
    <alternativeName>
        <fullName evidence="2">50S ribosomal protein L34</fullName>
    </alternativeName>
</protein>
<organism>
    <name type="scientific">Aliarcobacter butzleri (strain RM4018)</name>
    <name type="common">Arcobacter butzleri</name>
    <dbReference type="NCBI Taxonomy" id="367737"/>
    <lineage>
        <taxon>Bacteria</taxon>
        <taxon>Pseudomonadati</taxon>
        <taxon>Campylobacterota</taxon>
        <taxon>Epsilonproteobacteria</taxon>
        <taxon>Campylobacterales</taxon>
        <taxon>Arcobacteraceae</taxon>
        <taxon>Aliarcobacter</taxon>
    </lineage>
</organism>
<sequence>MKRTYQPHNTPRKRTHGFRVRMATKNGRRVINARRAKGRKRLAV</sequence>
<gene>
    <name evidence="1" type="primary">rpmH</name>
    <name type="ordered locus">Abu_1625</name>
</gene>
<accession>A8EV99</accession>
<evidence type="ECO:0000255" key="1">
    <source>
        <dbReference type="HAMAP-Rule" id="MF_00391"/>
    </source>
</evidence>
<evidence type="ECO:0000305" key="2"/>